<protein>
    <recommendedName>
        <fullName evidence="1">NAD(P)H-quinone oxidoreductase subunit I, chloroplastic</fullName>
        <ecNumber evidence="1">7.1.1.-</ecNumber>
    </recommendedName>
    <alternativeName>
        <fullName evidence="1">NAD(P)H dehydrogenase subunit I</fullName>
        <shortName evidence="1">NDH subunit I</shortName>
    </alternativeName>
    <alternativeName>
        <fullName evidence="1">NADH-plastoquinone oxidoreductase subunit I</fullName>
    </alternativeName>
</protein>
<reference key="1">
    <citation type="journal article" date="2007" name="Mol. Phylogenet. Evol.">
        <title>Phylogenetic and evolutionary implications of complete chloroplast genome sequences of four early-diverging angiosperms: Buxus (Buxaceae), Chloranthus (Chloranthaceae), Dioscorea (Dioscoreaceae), and Illicium (Schisandraceae).</title>
        <authorList>
            <person name="Hansen D.R."/>
            <person name="Dastidar S.G."/>
            <person name="Cai Z."/>
            <person name="Penaflor C."/>
            <person name="Kuehl J.V."/>
            <person name="Boore J.L."/>
            <person name="Jansen R.K."/>
        </authorList>
    </citation>
    <scope>NUCLEOTIDE SEQUENCE [LARGE SCALE GENOMIC DNA]</scope>
</reference>
<proteinExistence type="inferred from homology"/>
<feature type="chain" id="PRO_0000298570" description="NAD(P)H-quinone oxidoreductase subunit I, chloroplastic">
    <location>
        <begin position="1"/>
        <end position="182"/>
    </location>
</feature>
<feature type="domain" description="4Fe-4S ferredoxin-type 1" evidence="1">
    <location>
        <begin position="55"/>
        <end position="84"/>
    </location>
</feature>
<feature type="domain" description="4Fe-4S ferredoxin-type 2" evidence="1">
    <location>
        <begin position="95"/>
        <end position="124"/>
    </location>
</feature>
<feature type="binding site" evidence="1">
    <location>
        <position position="64"/>
    </location>
    <ligand>
        <name>[4Fe-4S] cluster</name>
        <dbReference type="ChEBI" id="CHEBI:49883"/>
        <label>1</label>
    </ligand>
</feature>
<feature type="binding site" evidence="1">
    <location>
        <position position="67"/>
    </location>
    <ligand>
        <name>[4Fe-4S] cluster</name>
        <dbReference type="ChEBI" id="CHEBI:49883"/>
        <label>1</label>
    </ligand>
</feature>
<feature type="binding site" evidence="1">
    <location>
        <position position="70"/>
    </location>
    <ligand>
        <name>[4Fe-4S] cluster</name>
        <dbReference type="ChEBI" id="CHEBI:49883"/>
        <label>1</label>
    </ligand>
</feature>
<feature type="binding site" evidence="1">
    <location>
        <position position="74"/>
    </location>
    <ligand>
        <name>[4Fe-4S] cluster</name>
        <dbReference type="ChEBI" id="CHEBI:49883"/>
        <label>2</label>
    </ligand>
</feature>
<feature type="binding site" evidence="1">
    <location>
        <position position="104"/>
    </location>
    <ligand>
        <name>[4Fe-4S] cluster</name>
        <dbReference type="ChEBI" id="CHEBI:49883"/>
        <label>2</label>
    </ligand>
</feature>
<feature type="binding site" evidence="1">
    <location>
        <position position="107"/>
    </location>
    <ligand>
        <name>[4Fe-4S] cluster</name>
        <dbReference type="ChEBI" id="CHEBI:49883"/>
        <label>2</label>
    </ligand>
</feature>
<feature type="binding site" evidence="1">
    <location>
        <position position="110"/>
    </location>
    <ligand>
        <name>[4Fe-4S] cluster</name>
        <dbReference type="ChEBI" id="CHEBI:49883"/>
        <label>2</label>
    </ligand>
</feature>
<feature type="binding site" evidence="1">
    <location>
        <position position="114"/>
    </location>
    <ligand>
        <name>[4Fe-4S] cluster</name>
        <dbReference type="ChEBI" id="CHEBI:49883"/>
        <label>1</label>
    </ligand>
</feature>
<organism>
    <name type="scientific">Buxus microphylla</name>
    <name type="common">Littleleaf boxwood</name>
    <name type="synonym">Japanese boxwood</name>
    <dbReference type="NCBI Taxonomy" id="153571"/>
    <lineage>
        <taxon>Eukaryota</taxon>
        <taxon>Viridiplantae</taxon>
        <taxon>Streptophyta</taxon>
        <taxon>Embryophyta</taxon>
        <taxon>Tracheophyta</taxon>
        <taxon>Spermatophyta</taxon>
        <taxon>Magnoliopsida</taxon>
        <taxon>Buxales</taxon>
        <taxon>Buxaceae</taxon>
        <taxon>Buxus</taxon>
    </lineage>
</organism>
<sequence length="182" mass="21276">MFPMITGFMNYGQQTVRAARYIGQSFMITLSHTNRLPVTIQYPYEKLLTSERFRGRIHFEFDKCIACEVCVRVCPIDLPVVDWKLETYIRKKRLLNYSIDFGICIFCGNCVEYCPTNCLSMTEEYELSTYDRHELNYNQIALGRLPMSAIGDYTIRTIMNSPQTKIKTSMDKPFDSRTITNH</sequence>
<geneLocation type="chloroplast"/>
<comment type="function">
    <text evidence="1">NDH shuttles electrons from NAD(P)H:plastoquinone, via FMN and iron-sulfur (Fe-S) centers, to quinones in the photosynthetic chain and possibly in a chloroplast respiratory chain. The immediate electron acceptor for the enzyme in this species is believed to be plastoquinone. Couples the redox reaction to proton translocation, and thus conserves the redox energy in a proton gradient.</text>
</comment>
<comment type="catalytic activity">
    <reaction evidence="1">
        <text>a plastoquinone + NADH + (n+1) H(+)(in) = a plastoquinol + NAD(+) + n H(+)(out)</text>
        <dbReference type="Rhea" id="RHEA:42608"/>
        <dbReference type="Rhea" id="RHEA-COMP:9561"/>
        <dbReference type="Rhea" id="RHEA-COMP:9562"/>
        <dbReference type="ChEBI" id="CHEBI:15378"/>
        <dbReference type="ChEBI" id="CHEBI:17757"/>
        <dbReference type="ChEBI" id="CHEBI:57540"/>
        <dbReference type="ChEBI" id="CHEBI:57945"/>
        <dbReference type="ChEBI" id="CHEBI:62192"/>
    </reaction>
</comment>
<comment type="catalytic activity">
    <reaction evidence="1">
        <text>a plastoquinone + NADPH + (n+1) H(+)(in) = a plastoquinol + NADP(+) + n H(+)(out)</text>
        <dbReference type="Rhea" id="RHEA:42612"/>
        <dbReference type="Rhea" id="RHEA-COMP:9561"/>
        <dbReference type="Rhea" id="RHEA-COMP:9562"/>
        <dbReference type="ChEBI" id="CHEBI:15378"/>
        <dbReference type="ChEBI" id="CHEBI:17757"/>
        <dbReference type="ChEBI" id="CHEBI:57783"/>
        <dbReference type="ChEBI" id="CHEBI:58349"/>
        <dbReference type="ChEBI" id="CHEBI:62192"/>
    </reaction>
</comment>
<comment type="cofactor">
    <cofactor evidence="1">
        <name>[4Fe-4S] cluster</name>
        <dbReference type="ChEBI" id="CHEBI:49883"/>
    </cofactor>
    <text evidence="1">Binds 2 [4Fe-4S] clusters per subunit.</text>
</comment>
<comment type="subunit">
    <text evidence="1">NDH is composed of at least 16 different subunits, 5 of which are encoded in the nucleus.</text>
</comment>
<comment type="subcellular location">
    <subcellularLocation>
        <location evidence="1">Plastid</location>
        <location evidence="1">Chloroplast thylakoid membrane</location>
        <topology evidence="1">Peripheral membrane protein</topology>
    </subcellularLocation>
</comment>
<comment type="similarity">
    <text evidence="1">Belongs to the complex I 23 kDa subunit family.</text>
</comment>
<accession>A6MM91</accession>
<evidence type="ECO:0000255" key="1">
    <source>
        <dbReference type="HAMAP-Rule" id="MF_01351"/>
    </source>
</evidence>
<keyword id="KW-0004">4Fe-4S</keyword>
<keyword id="KW-0150">Chloroplast</keyword>
<keyword id="KW-0408">Iron</keyword>
<keyword id="KW-0411">Iron-sulfur</keyword>
<keyword id="KW-0472">Membrane</keyword>
<keyword id="KW-0479">Metal-binding</keyword>
<keyword id="KW-0520">NAD</keyword>
<keyword id="KW-0521">NADP</keyword>
<keyword id="KW-0934">Plastid</keyword>
<keyword id="KW-0618">Plastoquinone</keyword>
<keyword id="KW-0874">Quinone</keyword>
<keyword id="KW-0677">Repeat</keyword>
<keyword id="KW-0793">Thylakoid</keyword>
<keyword id="KW-1278">Translocase</keyword>
<gene>
    <name evidence="1" type="primary">ndhI</name>
</gene>
<dbReference type="EC" id="7.1.1.-" evidence="1"/>
<dbReference type="EMBL" id="EF380351">
    <property type="protein sequence ID" value="ABQ45304.1"/>
    <property type="molecule type" value="Genomic_DNA"/>
</dbReference>
<dbReference type="RefSeq" id="YP_001294239.1">
    <property type="nucleotide sequence ID" value="NC_009599.1"/>
</dbReference>
<dbReference type="SMR" id="A6MM91"/>
<dbReference type="GeneID" id="5236857"/>
<dbReference type="GO" id="GO:0009535">
    <property type="term" value="C:chloroplast thylakoid membrane"/>
    <property type="evidence" value="ECO:0007669"/>
    <property type="project" value="UniProtKB-SubCell"/>
</dbReference>
<dbReference type="GO" id="GO:0051539">
    <property type="term" value="F:4 iron, 4 sulfur cluster binding"/>
    <property type="evidence" value="ECO:0007669"/>
    <property type="project" value="UniProtKB-KW"/>
</dbReference>
<dbReference type="GO" id="GO:0005506">
    <property type="term" value="F:iron ion binding"/>
    <property type="evidence" value="ECO:0007669"/>
    <property type="project" value="UniProtKB-UniRule"/>
</dbReference>
<dbReference type="GO" id="GO:0008137">
    <property type="term" value="F:NADH dehydrogenase (ubiquinone) activity"/>
    <property type="evidence" value="ECO:0007669"/>
    <property type="project" value="InterPro"/>
</dbReference>
<dbReference type="GO" id="GO:0048038">
    <property type="term" value="F:quinone binding"/>
    <property type="evidence" value="ECO:0007669"/>
    <property type="project" value="UniProtKB-KW"/>
</dbReference>
<dbReference type="GO" id="GO:0019684">
    <property type="term" value="P:photosynthesis, light reaction"/>
    <property type="evidence" value="ECO:0007669"/>
    <property type="project" value="UniProtKB-UniRule"/>
</dbReference>
<dbReference type="FunFam" id="3.30.70.3270:FF:000006">
    <property type="entry name" value="NAD(P)H-quinone oxidoreductase subunit I, chloroplastic"/>
    <property type="match status" value="1"/>
</dbReference>
<dbReference type="Gene3D" id="3.30.70.3270">
    <property type="match status" value="1"/>
</dbReference>
<dbReference type="HAMAP" id="MF_01351">
    <property type="entry name" value="NDH1_NuoI"/>
    <property type="match status" value="1"/>
</dbReference>
<dbReference type="InterPro" id="IPR017896">
    <property type="entry name" value="4Fe4S_Fe-S-bd"/>
</dbReference>
<dbReference type="InterPro" id="IPR017900">
    <property type="entry name" value="4Fe4S_Fe_S_CS"/>
</dbReference>
<dbReference type="InterPro" id="IPR010226">
    <property type="entry name" value="NADH_quinone_OxRdtase_chainI"/>
</dbReference>
<dbReference type="InterPro" id="IPR004497">
    <property type="entry name" value="NDHI"/>
</dbReference>
<dbReference type="NCBIfam" id="TIGR00403">
    <property type="entry name" value="ndhI"/>
    <property type="match status" value="1"/>
</dbReference>
<dbReference type="NCBIfam" id="TIGR01971">
    <property type="entry name" value="NuoI"/>
    <property type="match status" value="1"/>
</dbReference>
<dbReference type="NCBIfam" id="NF004537">
    <property type="entry name" value="PRK05888.1-3"/>
    <property type="match status" value="1"/>
</dbReference>
<dbReference type="PANTHER" id="PTHR47275">
    <property type="entry name" value="NAD(P)H-QUINONE OXIDOREDUCTASE SUBUNIT I, CHLOROPLASTIC"/>
    <property type="match status" value="1"/>
</dbReference>
<dbReference type="PANTHER" id="PTHR47275:SF1">
    <property type="entry name" value="NAD(P)H-QUINONE OXIDOREDUCTASE SUBUNIT I, CHLOROPLASTIC"/>
    <property type="match status" value="1"/>
</dbReference>
<dbReference type="Pfam" id="PF00037">
    <property type="entry name" value="Fer4"/>
    <property type="match status" value="2"/>
</dbReference>
<dbReference type="SUPFAM" id="SSF54862">
    <property type="entry name" value="4Fe-4S ferredoxins"/>
    <property type="match status" value="1"/>
</dbReference>
<dbReference type="PROSITE" id="PS00198">
    <property type="entry name" value="4FE4S_FER_1"/>
    <property type="match status" value="2"/>
</dbReference>
<dbReference type="PROSITE" id="PS51379">
    <property type="entry name" value="4FE4S_FER_2"/>
    <property type="match status" value="2"/>
</dbReference>
<name>NDHI_BUXMI</name>